<sequence>MAFTLTNKNVVFVAGLGGIGLDTSKELVKRDLKNLVILDRIENPAAIAELKAINPKVTVTFYPYDVTVPIAETTKLLKTIFAQLKTIDVLINGAGILDDHQIERTIAVNYTGLVNTTTAILDFWDKRKGGPGGIICNIGSVTGFNAIYQVPVYSGTKAAVVNFTSSLAKLAPITGVTAYTVNPGITRTTLVHKFNSWLDVEPQVAEKLLAHPTQPSLACAENFVKAIELNQNGAIWKLDLGTLEAIQWSKHWDSGI</sequence>
<name>ADH_DROTE</name>
<comment type="catalytic activity">
    <reaction evidence="2">
        <text>a primary alcohol + NAD(+) = an aldehyde + NADH + H(+)</text>
        <dbReference type="Rhea" id="RHEA:10736"/>
        <dbReference type="ChEBI" id="CHEBI:15378"/>
        <dbReference type="ChEBI" id="CHEBI:15734"/>
        <dbReference type="ChEBI" id="CHEBI:17478"/>
        <dbReference type="ChEBI" id="CHEBI:57540"/>
        <dbReference type="ChEBI" id="CHEBI:57945"/>
        <dbReference type="EC" id="1.1.1.1"/>
    </reaction>
</comment>
<comment type="catalytic activity">
    <reaction evidence="2">
        <text>a secondary alcohol + NAD(+) = a ketone + NADH + H(+)</text>
        <dbReference type="Rhea" id="RHEA:10740"/>
        <dbReference type="ChEBI" id="CHEBI:15378"/>
        <dbReference type="ChEBI" id="CHEBI:17087"/>
        <dbReference type="ChEBI" id="CHEBI:35681"/>
        <dbReference type="ChEBI" id="CHEBI:57540"/>
        <dbReference type="ChEBI" id="CHEBI:57945"/>
        <dbReference type="EC" id="1.1.1.1"/>
    </reaction>
</comment>
<comment type="subunit">
    <text>Homodimer.</text>
</comment>
<comment type="similarity">
    <text evidence="3">Belongs to the short-chain dehydrogenases/reductases (SDR) family.</text>
</comment>
<dbReference type="EC" id="1.1.1.1"/>
<dbReference type="EMBL" id="X54118">
    <property type="protein sequence ID" value="CAA38060.1"/>
    <property type="molecule type" value="Genomic_DNA"/>
</dbReference>
<dbReference type="SMR" id="P28484"/>
<dbReference type="EnsemblMetazoa" id="XM_043807166.1">
    <property type="protein sequence ID" value="XP_043663101.1"/>
    <property type="gene ID" value="LOC122626787"/>
</dbReference>
<dbReference type="GO" id="GO:0005829">
    <property type="term" value="C:cytosol"/>
    <property type="evidence" value="ECO:0007669"/>
    <property type="project" value="TreeGrafter"/>
</dbReference>
<dbReference type="GO" id="GO:0004022">
    <property type="term" value="F:alcohol dehydrogenase (NAD+) activity"/>
    <property type="evidence" value="ECO:0007669"/>
    <property type="project" value="UniProtKB-EC"/>
</dbReference>
<dbReference type="GO" id="GO:0006066">
    <property type="term" value="P:alcohol metabolic process"/>
    <property type="evidence" value="ECO:0007669"/>
    <property type="project" value="InterPro"/>
</dbReference>
<dbReference type="CDD" id="cd05323">
    <property type="entry name" value="ADH_SDR_c_like"/>
    <property type="match status" value="1"/>
</dbReference>
<dbReference type="FunFam" id="3.40.50.720:FF:000302">
    <property type="entry name" value="Alcohol dehydrogenase"/>
    <property type="match status" value="1"/>
</dbReference>
<dbReference type="Gene3D" id="3.40.50.720">
    <property type="entry name" value="NAD(P)-binding Rossmann-like Domain"/>
    <property type="match status" value="1"/>
</dbReference>
<dbReference type="InterPro" id="IPR002425">
    <property type="entry name" value="ADH_Drosophila-type"/>
</dbReference>
<dbReference type="InterPro" id="IPR036291">
    <property type="entry name" value="NAD(P)-bd_dom_sf"/>
</dbReference>
<dbReference type="InterPro" id="IPR020904">
    <property type="entry name" value="Sc_DH/Rdtase_CS"/>
</dbReference>
<dbReference type="InterPro" id="IPR002347">
    <property type="entry name" value="SDR_fam"/>
</dbReference>
<dbReference type="PANTHER" id="PTHR42901">
    <property type="entry name" value="ALCOHOL DEHYDROGENASE"/>
    <property type="match status" value="1"/>
</dbReference>
<dbReference type="PANTHER" id="PTHR42901:SF1">
    <property type="entry name" value="ALCOHOL DEHYDROGENASE"/>
    <property type="match status" value="1"/>
</dbReference>
<dbReference type="Pfam" id="PF00106">
    <property type="entry name" value="adh_short"/>
    <property type="match status" value="1"/>
</dbReference>
<dbReference type="PRINTS" id="PR01168">
    <property type="entry name" value="ALCDHDRGNASE"/>
</dbReference>
<dbReference type="PRINTS" id="PR01167">
    <property type="entry name" value="INSADHFAMILY"/>
</dbReference>
<dbReference type="PRINTS" id="PR00080">
    <property type="entry name" value="SDRFAMILY"/>
</dbReference>
<dbReference type="SUPFAM" id="SSF51735">
    <property type="entry name" value="NAD(P)-binding Rossmann-fold domains"/>
    <property type="match status" value="1"/>
</dbReference>
<dbReference type="PROSITE" id="PS00061">
    <property type="entry name" value="ADH_SHORT"/>
    <property type="match status" value="1"/>
</dbReference>
<proteinExistence type="inferred from homology"/>
<keyword id="KW-0520">NAD</keyword>
<keyword id="KW-0560">Oxidoreductase</keyword>
<evidence type="ECO:0000250" key="1"/>
<evidence type="ECO:0000255" key="2">
    <source>
        <dbReference type="PROSITE-ProRule" id="PRU10001"/>
    </source>
</evidence>
<evidence type="ECO:0000305" key="3"/>
<feature type="initiator methionine" description="Removed" evidence="1">
    <location>
        <position position="1"/>
    </location>
</feature>
<feature type="chain" id="PRO_0000054497" description="Alcohol dehydrogenase">
    <location>
        <begin position="2"/>
        <end position="256"/>
    </location>
</feature>
<feature type="active site" description="Proton acceptor" evidence="2">
    <location>
        <position position="153"/>
    </location>
</feature>
<feature type="binding site" evidence="1">
    <location>
        <begin position="12"/>
        <end position="35"/>
    </location>
    <ligand>
        <name>NAD(+)</name>
        <dbReference type="ChEBI" id="CHEBI:57540"/>
    </ligand>
</feature>
<feature type="binding site" evidence="1">
    <location>
        <position position="140"/>
    </location>
    <ligand>
        <name>substrate</name>
    </ligand>
</feature>
<protein>
    <recommendedName>
        <fullName>Alcohol dehydrogenase</fullName>
        <ecNumber>1.1.1.1</ecNumber>
    </recommendedName>
</protein>
<organism>
    <name type="scientific">Drosophila teissieri</name>
    <name type="common">Fruit fly</name>
    <dbReference type="NCBI Taxonomy" id="7243"/>
    <lineage>
        <taxon>Eukaryota</taxon>
        <taxon>Metazoa</taxon>
        <taxon>Ecdysozoa</taxon>
        <taxon>Arthropoda</taxon>
        <taxon>Hexapoda</taxon>
        <taxon>Insecta</taxon>
        <taxon>Pterygota</taxon>
        <taxon>Neoptera</taxon>
        <taxon>Endopterygota</taxon>
        <taxon>Diptera</taxon>
        <taxon>Brachycera</taxon>
        <taxon>Muscomorpha</taxon>
        <taxon>Ephydroidea</taxon>
        <taxon>Drosophilidae</taxon>
        <taxon>Drosophila</taxon>
        <taxon>Sophophora</taxon>
    </lineage>
</organism>
<reference key="1">
    <citation type="submission" date="1990-07" db="EMBL/GenBank/DDBJ databases">
        <authorList>
            <person name="Ashburner M."/>
        </authorList>
    </citation>
    <scope>NUCLEOTIDE SEQUENCE [GENOMIC DNA]</scope>
</reference>
<accession>P28484</accession>
<gene>
    <name type="primary">Adh</name>
</gene>